<sequence>MKRIAFVFSTVPHGTAAGREGLDALLATSALTDDLAVFFIADGVFQLLPGQKPDAVLARDYIATFKLLGLYDIEQCWVCAASLRERGLDPQTPFVVEATPLEADALRRELANYDVILRF</sequence>
<keyword id="KW-0963">Cytoplasm</keyword>
<keyword id="KW-1185">Reference proteome</keyword>
<keyword id="KW-0819">tRNA processing</keyword>
<name>TUSC_ECOK1</name>
<feature type="chain" id="PRO_1000013240" description="Protein TusC">
    <location>
        <begin position="1"/>
        <end position="119"/>
    </location>
</feature>
<reference key="1">
    <citation type="journal article" date="2007" name="J. Bacteriol.">
        <title>The genome sequence of avian pathogenic Escherichia coli strain O1:K1:H7 shares strong similarities with human extraintestinal pathogenic E. coli genomes.</title>
        <authorList>
            <person name="Johnson T.J."/>
            <person name="Kariyawasam S."/>
            <person name="Wannemuehler Y."/>
            <person name="Mangiamele P."/>
            <person name="Johnson S.J."/>
            <person name="Doetkott C."/>
            <person name="Skyberg J.A."/>
            <person name="Lynne A.M."/>
            <person name="Johnson J.R."/>
            <person name="Nolan L.K."/>
        </authorList>
    </citation>
    <scope>NUCLEOTIDE SEQUENCE [LARGE SCALE GENOMIC DNA]</scope>
</reference>
<organism>
    <name type="scientific">Escherichia coli O1:K1 / APEC</name>
    <dbReference type="NCBI Taxonomy" id="405955"/>
    <lineage>
        <taxon>Bacteria</taxon>
        <taxon>Pseudomonadati</taxon>
        <taxon>Pseudomonadota</taxon>
        <taxon>Gammaproteobacteria</taxon>
        <taxon>Enterobacterales</taxon>
        <taxon>Enterobacteriaceae</taxon>
        <taxon>Escherichia</taxon>
    </lineage>
</organism>
<proteinExistence type="inferred from homology"/>
<gene>
    <name evidence="1" type="primary">tusC</name>
    <name type="ordered locus">Ecok1_33270</name>
    <name type="ORF">APECO1_3109</name>
</gene>
<dbReference type="EMBL" id="CP000468">
    <property type="protein sequence ID" value="ABJ02821.1"/>
    <property type="molecule type" value="Genomic_DNA"/>
</dbReference>
<dbReference type="RefSeq" id="WP_000820734.1">
    <property type="nucleotide sequence ID" value="NZ_CADILS010000059.1"/>
</dbReference>
<dbReference type="SMR" id="A1AGN1"/>
<dbReference type="KEGG" id="ecv:APECO1_3109"/>
<dbReference type="HOGENOM" id="CLU_155943_1_0_6"/>
<dbReference type="Proteomes" id="UP000008216">
    <property type="component" value="Chromosome"/>
</dbReference>
<dbReference type="GO" id="GO:0005737">
    <property type="term" value="C:cytoplasm"/>
    <property type="evidence" value="ECO:0007669"/>
    <property type="project" value="UniProtKB-SubCell"/>
</dbReference>
<dbReference type="GO" id="GO:0008033">
    <property type="term" value="P:tRNA processing"/>
    <property type="evidence" value="ECO:0007669"/>
    <property type="project" value="UniProtKB-UniRule"/>
</dbReference>
<dbReference type="FunFam" id="3.40.1260.10:FF:000004">
    <property type="entry name" value="Sulfurtransferase TusC"/>
    <property type="match status" value="1"/>
</dbReference>
<dbReference type="Gene3D" id="3.40.1260.10">
    <property type="entry name" value="DsrEFH-like"/>
    <property type="match status" value="1"/>
</dbReference>
<dbReference type="HAMAP" id="MF_00389">
    <property type="entry name" value="Thiourid_synth_C"/>
    <property type="match status" value="1"/>
</dbReference>
<dbReference type="InterPro" id="IPR027396">
    <property type="entry name" value="DsrEFH-like"/>
</dbReference>
<dbReference type="InterPro" id="IPR003787">
    <property type="entry name" value="Sulphur_relay_DsrE/F-like"/>
</dbReference>
<dbReference type="InterPro" id="IPR037450">
    <property type="entry name" value="Sulphur_relay_TusC"/>
</dbReference>
<dbReference type="InterPro" id="IPR017462">
    <property type="entry name" value="Sulphur_relay_TusC/DsrF"/>
</dbReference>
<dbReference type="NCBIfam" id="NF001238">
    <property type="entry name" value="PRK00211.1"/>
    <property type="match status" value="1"/>
</dbReference>
<dbReference type="NCBIfam" id="TIGR03010">
    <property type="entry name" value="sulf_tusC_dsrF"/>
    <property type="match status" value="1"/>
</dbReference>
<dbReference type="PANTHER" id="PTHR38780">
    <property type="entry name" value="PROTEIN TUSC"/>
    <property type="match status" value="1"/>
</dbReference>
<dbReference type="PANTHER" id="PTHR38780:SF1">
    <property type="entry name" value="PROTEIN TUSC"/>
    <property type="match status" value="1"/>
</dbReference>
<dbReference type="Pfam" id="PF02635">
    <property type="entry name" value="DsrE"/>
    <property type="match status" value="1"/>
</dbReference>
<dbReference type="SUPFAM" id="SSF75169">
    <property type="entry name" value="DsrEFH-like"/>
    <property type="match status" value="1"/>
</dbReference>
<evidence type="ECO:0000255" key="1">
    <source>
        <dbReference type="HAMAP-Rule" id="MF_00389"/>
    </source>
</evidence>
<protein>
    <recommendedName>
        <fullName evidence="1">Protein TusC</fullName>
    </recommendedName>
    <alternativeName>
        <fullName evidence="1">tRNA 2-thiouridine synthesizing protein C</fullName>
    </alternativeName>
</protein>
<accession>A1AGN1</accession>
<comment type="function">
    <text evidence="1">Part of a sulfur-relay system required for 2-thiolation of 5-methylaminomethyl-2-thiouridine (mnm(5)s(2)U) at tRNA wobble positions.</text>
</comment>
<comment type="subunit">
    <text evidence="1">Heterohexamer, formed by a dimer of trimers. The hexameric TusBCD complex contains 2 copies each of TusB, TusC and TusD. The TusBCD complex interacts with TusE.</text>
</comment>
<comment type="subcellular location">
    <subcellularLocation>
        <location evidence="1">Cytoplasm</location>
    </subcellularLocation>
</comment>
<comment type="similarity">
    <text evidence="1">Belongs to the DsrF/TusC family.</text>
</comment>